<accession>A1T521</accession>
<organism>
    <name type="scientific">Mycolicibacterium vanbaalenii (strain DSM 7251 / JCM 13017 / BCRC 16820 / KCTC 9966 / NRRL B-24157 / PYR-1)</name>
    <name type="common">Mycobacterium vanbaalenii</name>
    <dbReference type="NCBI Taxonomy" id="350058"/>
    <lineage>
        <taxon>Bacteria</taxon>
        <taxon>Bacillati</taxon>
        <taxon>Actinomycetota</taxon>
        <taxon>Actinomycetes</taxon>
        <taxon>Mycobacteriales</taxon>
        <taxon>Mycobacteriaceae</taxon>
        <taxon>Mycolicibacterium</taxon>
    </lineage>
</organism>
<keyword id="KW-0687">Ribonucleoprotein</keyword>
<keyword id="KW-0689">Ribosomal protein</keyword>
<dbReference type="EMBL" id="CP000511">
    <property type="protein sequence ID" value="ABM12271.1"/>
    <property type="molecule type" value="Genomic_DNA"/>
</dbReference>
<dbReference type="RefSeq" id="WP_011778697.1">
    <property type="nucleotide sequence ID" value="NZ_JACKSD010000066.1"/>
</dbReference>
<dbReference type="SMR" id="A1T521"/>
<dbReference type="STRING" id="350058.Mvan_1437"/>
<dbReference type="KEGG" id="mva:Mvan_1437"/>
<dbReference type="eggNOG" id="COG0203">
    <property type="taxonomic scope" value="Bacteria"/>
</dbReference>
<dbReference type="HOGENOM" id="CLU_074407_0_0_11"/>
<dbReference type="Proteomes" id="UP000009159">
    <property type="component" value="Chromosome"/>
</dbReference>
<dbReference type="GO" id="GO:0022625">
    <property type="term" value="C:cytosolic large ribosomal subunit"/>
    <property type="evidence" value="ECO:0007669"/>
    <property type="project" value="TreeGrafter"/>
</dbReference>
<dbReference type="GO" id="GO:0003735">
    <property type="term" value="F:structural constituent of ribosome"/>
    <property type="evidence" value="ECO:0007669"/>
    <property type="project" value="InterPro"/>
</dbReference>
<dbReference type="GO" id="GO:0006412">
    <property type="term" value="P:translation"/>
    <property type="evidence" value="ECO:0007669"/>
    <property type="project" value="UniProtKB-UniRule"/>
</dbReference>
<dbReference type="FunFam" id="3.90.1030.10:FF:000001">
    <property type="entry name" value="50S ribosomal protein L17"/>
    <property type="match status" value="1"/>
</dbReference>
<dbReference type="Gene3D" id="3.90.1030.10">
    <property type="entry name" value="Ribosomal protein L17"/>
    <property type="match status" value="1"/>
</dbReference>
<dbReference type="HAMAP" id="MF_01368">
    <property type="entry name" value="Ribosomal_bL17"/>
    <property type="match status" value="1"/>
</dbReference>
<dbReference type="InterPro" id="IPR000456">
    <property type="entry name" value="Ribosomal_bL17"/>
</dbReference>
<dbReference type="InterPro" id="IPR047859">
    <property type="entry name" value="Ribosomal_bL17_CS"/>
</dbReference>
<dbReference type="InterPro" id="IPR036373">
    <property type="entry name" value="Ribosomal_bL17_sf"/>
</dbReference>
<dbReference type="NCBIfam" id="TIGR00059">
    <property type="entry name" value="L17"/>
    <property type="match status" value="1"/>
</dbReference>
<dbReference type="PANTHER" id="PTHR14413:SF16">
    <property type="entry name" value="LARGE RIBOSOMAL SUBUNIT PROTEIN BL17M"/>
    <property type="match status" value="1"/>
</dbReference>
<dbReference type="PANTHER" id="PTHR14413">
    <property type="entry name" value="RIBOSOMAL PROTEIN L17"/>
    <property type="match status" value="1"/>
</dbReference>
<dbReference type="Pfam" id="PF01196">
    <property type="entry name" value="Ribosomal_L17"/>
    <property type="match status" value="1"/>
</dbReference>
<dbReference type="SUPFAM" id="SSF64263">
    <property type="entry name" value="Prokaryotic ribosomal protein L17"/>
    <property type="match status" value="1"/>
</dbReference>
<dbReference type="PROSITE" id="PS01167">
    <property type="entry name" value="RIBOSOMAL_L17"/>
    <property type="match status" value="1"/>
</dbReference>
<evidence type="ECO:0000255" key="1">
    <source>
        <dbReference type="HAMAP-Rule" id="MF_01368"/>
    </source>
</evidence>
<evidence type="ECO:0000256" key="2">
    <source>
        <dbReference type="SAM" id="MobiDB-lite"/>
    </source>
</evidence>
<evidence type="ECO:0000305" key="3"/>
<protein>
    <recommendedName>
        <fullName evidence="1">Large ribosomal subunit protein bL17</fullName>
    </recommendedName>
    <alternativeName>
        <fullName evidence="3">50S ribosomal protein L17</fullName>
    </alternativeName>
</protein>
<proteinExistence type="inferred from homology"/>
<comment type="subunit">
    <text evidence="1">Part of the 50S ribosomal subunit. Contacts protein L32.</text>
</comment>
<comment type="similarity">
    <text evidence="1">Belongs to the bacterial ribosomal protein bL17 family.</text>
</comment>
<name>RL17_MYCVP</name>
<gene>
    <name evidence="1" type="primary">rplQ</name>
    <name type="ordered locus">Mvan_1437</name>
</gene>
<reference key="1">
    <citation type="submission" date="2006-12" db="EMBL/GenBank/DDBJ databases">
        <title>Complete sequence of Mycobacterium vanbaalenii PYR-1.</title>
        <authorList>
            <consortium name="US DOE Joint Genome Institute"/>
            <person name="Copeland A."/>
            <person name="Lucas S."/>
            <person name="Lapidus A."/>
            <person name="Barry K."/>
            <person name="Detter J.C."/>
            <person name="Glavina del Rio T."/>
            <person name="Hammon N."/>
            <person name="Israni S."/>
            <person name="Dalin E."/>
            <person name="Tice H."/>
            <person name="Pitluck S."/>
            <person name="Singan V."/>
            <person name="Schmutz J."/>
            <person name="Larimer F."/>
            <person name="Land M."/>
            <person name="Hauser L."/>
            <person name="Kyrpides N."/>
            <person name="Anderson I.J."/>
            <person name="Miller C."/>
            <person name="Richardson P."/>
        </authorList>
    </citation>
    <scope>NUCLEOTIDE SEQUENCE [LARGE SCALE GENOMIC DNA]</scope>
    <source>
        <strain>DSM 7251 / JCM 13017 / BCRC 16820 / KCTC 9966 / NRRL B-24157 / PYR-1</strain>
    </source>
</reference>
<feature type="chain" id="PRO_1000055888" description="Large ribosomal subunit protein bL17">
    <location>
        <begin position="1"/>
        <end position="202"/>
    </location>
</feature>
<feature type="region of interest" description="Disordered" evidence="2">
    <location>
        <begin position="132"/>
        <end position="202"/>
    </location>
</feature>
<feature type="compositionally biased region" description="Low complexity" evidence="2">
    <location>
        <begin position="134"/>
        <end position="168"/>
    </location>
</feature>
<feature type="compositionally biased region" description="Acidic residues" evidence="2">
    <location>
        <begin position="169"/>
        <end position="193"/>
    </location>
</feature>
<sequence length="202" mass="21724">MPKPTKGPRLGGSSSHQKALLANLATSLFEHGRIKTTEPKARALRPYAEKLITHAKKGTLHNRREVMKKIRDKDVVHVLFAEIGPFFADRSGGYTRIIKVENRKGDNAPMAVIELVREKTVTSEANRARRADAAQKAASAGAQEVTAAAAPQAAVEPEAVETEASAETAEAEVETAEVEAVDEASAEEADEATEVEKADDDK</sequence>